<feature type="initiator methionine" description="Removed" evidence="11 12">
    <location>
        <position position="1"/>
    </location>
</feature>
<feature type="chain" id="PRO_0000022481" description="Transcription initiation factor IIA subunit 1">
    <location>
        <begin position="2"/>
        <end position="376"/>
    </location>
</feature>
<feature type="chain" id="PRO_0000042593" description="Transcription initiation factor IIA alpha chain">
    <location>
        <begin position="2"/>
        <end position="274"/>
    </location>
</feature>
<feature type="chain" id="PRO_0000042594" description="Transcription initiation factor IIA beta chain">
    <location>
        <begin position="275"/>
        <end position="376"/>
    </location>
</feature>
<feature type="region of interest" description="Disordered" evidence="1">
    <location>
        <begin position="69"/>
        <end position="107"/>
    </location>
</feature>
<feature type="region of interest" description="Disordered" evidence="1">
    <location>
        <begin position="247"/>
        <end position="266"/>
    </location>
</feature>
<feature type="region of interest" description="Disordered" evidence="1">
    <location>
        <begin position="274"/>
        <end position="329"/>
    </location>
</feature>
<feature type="compositionally biased region" description="Low complexity" evidence="1">
    <location>
        <begin position="69"/>
        <end position="79"/>
    </location>
</feature>
<feature type="compositionally biased region" description="Low complexity" evidence="1">
    <location>
        <begin position="89"/>
        <end position="105"/>
    </location>
</feature>
<feature type="compositionally biased region" description="Acidic residues" evidence="1">
    <location>
        <begin position="280"/>
        <end position="329"/>
    </location>
</feature>
<feature type="binding site" evidence="7 9">
    <location>
        <position position="343"/>
    </location>
    <ligand>
        <name>DNA</name>
        <dbReference type="ChEBI" id="CHEBI:16991"/>
    </ligand>
</feature>
<feature type="binding site" evidence="7 9">
    <location>
        <position position="344"/>
    </location>
    <ligand>
        <name>DNA</name>
        <dbReference type="ChEBI" id="CHEBI:16991"/>
    </ligand>
</feature>
<feature type="site" description="Cleavage; by TASP1">
    <location>
        <begin position="274"/>
        <end position="275"/>
    </location>
</feature>
<feature type="modified residue" description="N-acetylalanine" evidence="11 12">
    <location>
        <position position="2"/>
    </location>
</feature>
<feature type="modified residue" description="Phosphoserine; by TAF1" evidence="3">
    <location>
        <position position="280"/>
    </location>
</feature>
<feature type="modified residue" description="Phosphoserine; by TAF1" evidence="3">
    <location>
        <position position="281"/>
    </location>
</feature>
<feature type="modified residue" description="Phosphoserine; by TAF1" evidence="3 10">
    <location>
        <position position="316"/>
    </location>
</feature>
<feature type="modified residue" description="Phosphoserine; by TAF1" evidence="3 10">
    <location>
        <position position="321"/>
    </location>
</feature>
<feature type="splice variant" id="VSP_018798" description="In isoform 37 kDa." evidence="8">
    <location>
        <begin position="1"/>
        <end position="39"/>
    </location>
</feature>
<feature type="sequence variant" id="VAR_035667" description="In a breast cancer sample; somatic mutation." evidence="6">
    <original>L</original>
    <variation>V</variation>
    <location>
        <position position="30"/>
    </location>
</feature>
<feature type="sequence variant" id="VAR_054043" description="In dbSNP:rs17111579.">
    <original>A</original>
    <variation>P</variation>
    <location>
        <position position="109"/>
    </location>
</feature>
<feature type="mutagenesis site" description="Slightly affects cleavage and yields elevated levels of the precursor." evidence="4">
    <original>V</original>
    <variation>A</variation>
    <location>
        <position position="270"/>
    </location>
</feature>
<feature type="mutagenesis site" description="Abolishes cleavage." evidence="4">
    <original>Q</original>
    <variation>A</variation>
    <location>
        <position position="272"/>
    </location>
</feature>
<feature type="mutagenesis site" description="Abolishes cleavage." evidence="4">
    <original>V</original>
    <variation>A</variation>
    <location>
        <position position="273"/>
    </location>
</feature>
<feature type="mutagenesis site" description="Abolishes cleavage." evidence="4">
    <original>D</original>
    <variation>A</variation>
    <location>
        <position position="274"/>
    </location>
</feature>
<feature type="mutagenesis site" description="Abolishes cleavage." evidence="4">
    <original>G</original>
    <variation>A</variation>
    <location>
        <position position="275"/>
    </location>
</feature>
<feature type="mutagenesis site" description="Does not affect cleavage." evidence="4">
    <original>T</original>
    <variation>A</variation>
    <location>
        <position position="276"/>
    </location>
</feature>
<feature type="mutagenesis site" description="Does not affect cleavage." evidence="4">
    <original>G</original>
    <variation>A</variation>
    <location>
        <position position="277"/>
    </location>
</feature>
<feature type="mutagenesis site" description="Significant reduction of cleavage." evidence="4">
    <original>D</original>
    <variation>A</variation>
    <location>
        <position position="278"/>
    </location>
</feature>
<feature type="mutagenesis site" description="Slightly affects cleavage, yields elevated levels of the precursor. Eliminates phosphorylation; when associated with A-281; A-316 and A-321." evidence="3 4">
    <original>S</original>
    <variation>A</variation>
    <location>
        <position position="280"/>
    </location>
</feature>
<feature type="mutagenesis site" description="Eliminates phosphorylation; when associated with A-280; A-316 and A-321." evidence="3">
    <original>S</original>
    <variation>A</variation>
    <location>
        <position position="281"/>
    </location>
</feature>
<feature type="mutagenesis site" description="Slightly affects cleavage and yields elevated levels of the precursor." evidence="4">
    <original>E</original>
    <variation>A</variation>
    <location>
        <position position="282"/>
    </location>
</feature>
<feature type="mutagenesis site" description="Strongly reduces phosphorylation; when associated with A-321. Eliminates phosphorylation; when associated with A-280; A-281 and A-321." evidence="3">
    <original>S</original>
    <variation>A</variation>
    <location>
        <position position="316"/>
    </location>
</feature>
<feature type="mutagenesis site" description="Strongly reduces phosphorylation; when associated with A-316. Eliminates phosphorylation; when associated with A-280; A-281 and A-316." evidence="3">
    <original>S</original>
    <variation>A</variation>
    <location>
        <position position="321"/>
    </location>
</feature>
<feature type="helix" evidence="13">
    <location>
        <begin position="10"/>
        <end position="32"/>
    </location>
</feature>
<feature type="helix" evidence="13">
    <location>
        <begin position="36"/>
        <end position="50"/>
    </location>
</feature>
<feature type="strand" evidence="14">
    <location>
        <begin position="65"/>
        <end position="76"/>
    </location>
</feature>
<feature type="strand" evidence="14">
    <location>
        <begin position="79"/>
        <end position="83"/>
    </location>
</feature>
<feature type="helix" evidence="15">
    <location>
        <begin position="325"/>
        <end position="329"/>
    </location>
</feature>
<feature type="strand" evidence="13">
    <location>
        <begin position="334"/>
        <end position="345"/>
    </location>
</feature>
<feature type="strand" evidence="13">
    <location>
        <begin position="348"/>
        <end position="360"/>
    </location>
</feature>
<feature type="strand" evidence="13">
    <location>
        <begin position="363"/>
        <end position="375"/>
    </location>
</feature>
<name>TF2AA_HUMAN</name>
<protein>
    <recommendedName>
        <fullName>Transcription initiation factor IIA subunit 1</fullName>
    </recommendedName>
    <alternativeName>
        <fullName>General transcription factor IIA subunit 1</fullName>
    </alternativeName>
    <alternativeName>
        <fullName>TFIIAL</fullName>
    </alternativeName>
    <alternativeName>
        <fullName>Transcription initiation factor TFIIA 42 kDa subunit</fullName>
        <shortName>TFIIA-42</shortName>
    </alternativeName>
    <component>
        <recommendedName>
            <fullName>Transcription initiation factor IIA alpha chain</fullName>
        </recommendedName>
        <alternativeName>
            <fullName>TFIIA p35 subunit</fullName>
        </alternativeName>
    </component>
    <component>
        <recommendedName>
            <fullName>Transcription initiation factor IIA beta chain</fullName>
        </recommendedName>
        <alternativeName>
            <fullName>TFIIA p19 subunit</fullName>
        </alternativeName>
    </component>
</protein>
<gene>
    <name type="primary">GTF2A1</name>
    <name type="synonym">TF2A1</name>
</gene>
<organism>
    <name type="scientific">Homo sapiens</name>
    <name type="common">Human</name>
    <dbReference type="NCBI Taxonomy" id="9606"/>
    <lineage>
        <taxon>Eukaryota</taxon>
        <taxon>Metazoa</taxon>
        <taxon>Chordata</taxon>
        <taxon>Craniata</taxon>
        <taxon>Vertebrata</taxon>
        <taxon>Euteleostomi</taxon>
        <taxon>Mammalia</taxon>
        <taxon>Eutheria</taxon>
        <taxon>Euarchontoglires</taxon>
        <taxon>Primates</taxon>
        <taxon>Haplorrhini</taxon>
        <taxon>Catarrhini</taxon>
        <taxon>Hominidae</taxon>
        <taxon>Homo</taxon>
    </lineage>
</organism>
<keyword id="KW-0002">3D-structure</keyword>
<keyword id="KW-0007">Acetylation</keyword>
<keyword id="KW-0024">Alternative initiation</keyword>
<keyword id="KW-0903">Direct protein sequencing</keyword>
<keyword id="KW-0539">Nucleus</keyword>
<keyword id="KW-0597">Phosphoprotein</keyword>
<keyword id="KW-1267">Proteomics identification</keyword>
<keyword id="KW-1185">Reference proteome</keyword>
<keyword id="KW-0804">Transcription</keyword>
<keyword id="KW-0805">Transcription regulation</keyword>
<accession>P52655</accession>
<accession>Q3KNQ9</accession>
<reference key="1">
    <citation type="journal article" date="1993" name="Genes Dev.">
        <title>Isolation of a cDNA encoding the largest subunit of TFIIA reveals functions important for activated transcription.</title>
        <authorList>
            <person name="Ma D."/>
            <person name="Watanabe H."/>
            <person name="Mermelstein F."/>
            <person name="Admon A."/>
            <person name="Oguri K."/>
            <person name="Sun X."/>
            <person name="Wada T."/>
            <person name="Imai T."/>
            <person name="Shiroya T."/>
            <person name="Reinberg D."/>
            <person name="Handa H."/>
        </authorList>
    </citation>
    <scope>NUCLEOTIDE SEQUENCE [MRNA]</scope>
    <scope>PARTIAL PROTEIN SEQUENCE</scope>
</reference>
<reference key="2">
    <citation type="journal article" date="1993" name="Genes Dev.">
        <title>A single cDNA, hTFIIA/alpha, encodes both the p35 and p19 subunits of human TFIIA.</title>
        <authorList>
            <person name="Dejong J."/>
            <person name="Roeder R.G."/>
        </authorList>
    </citation>
    <scope>NUCLEOTIDE SEQUENCE [MRNA]</scope>
    <scope>PARTIAL PROTEIN SEQUENCE</scope>
</reference>
<reference key="3">
    <citation type="submission" date="1995-06" db="EMBL/GenBank/DDBJ databases">
        <authorList>
            <person name="Watanabe H."/>
            <person name="Oguri K."/>
            <person name="Wada T."/>
            <person name="Imai T."/>
            <person name="Shiroya T."/>
            <person name="Handa H."/>
        </authorList>
    </citation>
    <scope>NUCLEOTIDE SEQUENCE [MRNA]</scope>
</reference>
<reference key="4">
    <citation type="journal article" date="2003" name="Nature">
        <title>The DNA sequence and analysis of human chromosome 14.</title>
        <authorList>
            <person name="Heilig R."/>
            <person name="Eckenberg R."/>
            <person name="Petit J.-L."/>
            <person name="Fonknechten N."/>
            <person name="Da Silva C."/>
            <person name="Cattolico L."/>
            <person name="Levy M."/>
            <person name="Barbe V."/>
            <person name="De Berardinis V."/>
            <person name="Ureta-Vidal A."/>
            <person name="Pelletier E."/>
            <person name="Vico V."/>
            <person name="Anthouard V."/>
            <person name="Rowen L."/>
            <person name="Madan A."/>
            <person name="Qin S."/>
            <person name="Sun H."/>
            <person name="Du H."/>
            <person name="Pepin K."/>
            <person name="Artiguenave F."/>
            <person name="Robert C."/>
            <person name="Cruaud C."/>
            <person name="Bruels T."/>
            <person name="Jaillon O."/>
            <person name="Friedlander L."/>
            <person name="Samson G."/>
            <person name="Brottier P."/>
            <person name="Cure S."/>
            <person name="Segurens B."/>
            <person name="Aniere F."/>
            <person name="Samain S."/>
            <person name="Crespeau H."/>
            <person name="Abbasi N."/>
            <person name="Aiach N."/>
            <person name="Boscus D."/>
            <person name="Dickhoff R."/>
            <person name="Dors M."/>
            <person name="Dubois I."/>
            <person name="Friedman C."/>
            <person name="Gouyvenoux M."/>
            <person name="James R."/>
            <person name="Madan A."/>
            <person name="Mairey-Estrada B."/>
            <person name="Mangenot S."/>
            <person name="Martins N."/>
            <person name="Menard M."/>
            <person name="Oztas S."/>
            <person name="Ratcliffe A."/>
            <person name="Shaffer T."/>
            <person name="Trask B."/>
            <person name="Vacherie B."/>
            <person name="Bellemere C."/>
            <person name="Belser C."/>
            <person name="Besnard-Gonnet M."/>
            <person name="Bartol-Mavel D."/>
            <person name="Boutard M."/>
            <person name="Briez-Silla S."/>
            <person name="Combette S."/>
            <person name="Dufosse-Laurent V."/>
            <person name="Ferron C."/>
            <person name="Lechaplais C."/>
            <person name="Louesse C."/>
            <person name="Muselet D."/>
            <person name="Magdelenat G."/>
            <person name="Pateau E."/>
            <person name="Petit E."/>
            <person name="Sirvain-Trukniewicz P."/>
            <person name="Trybou A."/>
            <person name="Vega-Czarny N."/>
            <person name="Bataille E."/>
            <person name="Bluet E."/>
            <person name="Bordelais I."/>
            <person name="Dubois M."/>
            <person name="Dumont C."/>
            <person name="Guerin T."/>
            <person name="Haffray S."/>
            <person name="Hammadi R."/>
            <person name="Muanga J."/>
            <person name="Pellouin V."/>
            <person name="Robert D."/>
            <person name="Wunderle E."/>
            <person name="Gauguet G."/>
            <person name="Roy A."/>
            <person name="Sainte-Marthe L."/>
            <person name="Verdier J."/>
            <person name="Verdier-Discala C."/>
            <person name="Hillier L.W."/>
            <person name="Fulton L."/>
            <person name="McPherson J."/>
            <person name="Matsuda F."/>
            <person name="Wilson R."/>
            <person name="Scarpelli C."/>
            <person name="Gyapay G."/>
            <person name="Wincker P."/>
            <person name="Saurin W."/>
            <person name="Quetier F."/>
            <person name="Waterston R."/>
            <person name="Hood L."/>
            <person name="Weissenbach J."/>
        </authorList>
    </citation>
    <scope>NUCLEOTIDE SEQUENCE [LARGE SCALE GENOMIC DNA]</scope>
</reference>
<reference key="5">
    <citation type="journal article" date="2004" name="Genome Res.">
        <title>The status, quality, and expansion of the NIH full-length cDNA project: the Mammalian Gene Collection (MGC).</title>
        <authorList>
            <consortium name="The MGC Project Team"/>
        </authorList>
    </citation>
    <scope>NUCLEOTIDE SEQUENCE [LARGE SCALE MRNA]</scope>
</reference>
<reference key="6">
    <citation type="journal article" date="2000" name="Mol. Cell">
        <title>TAC, a TBP-sans-TAFs complex containing the unprocessed TFIIAalphabeta precursor and the TFIIAgamma subunit.</title>
        <authorList>
            <person name="Mitsiou D.J."/>
            <person name="Stunnenberg H.G."/>
        </authorList>
    </citation>
    <scope>FUNCTION</scope>
    <scope>SUBUNIT</scope>
    <scope>IDENTIFICATION IN A COMPLEX WITH GTF2A2 AND TBP</scope>
</reference>
<reference key="7">
    <citation type="journal article" date="2001" name="J. Biol. Chem.">
        <title>Taf(II) 250 phosphorylates human transcription factor IIA on serine residues important for TBP binding and transcription activity.</title>
        <authorList>
            <person name="Solow S."/>
            <person name="Salunek M."/>
            <person name="Ryan R."/>
            <person name="Lieberman P.M."/>
        </authorList>
    </citation>
    <scope>PHOSPHORYLATION AT SER-280; SER-281; SER-316 AND SER-321</scope>
    <scope>MUTAGENESIS OF SER-280; SER-281; SER-316 AND SER-321</scope>
</reference>
<reference key="8">
    <citation type="journal article" date="2004" name="EMBO J.">
        <title>Cleavage and proteasome-mediated degradation of the basal transcription factor TFIIA.</title>
        <authorList>
            <person name="Hoiby T."/>
            <person name="Mitsiou D.J."/>
            <person name="Zhou H."/>
            <person name="Erdjument-Bromage H."/>
            <person name="Tempst P."/>
            <person name="Stunnenberg H.G."/>
        </authorList>
    </citation>
    <scope>PROTEIN SEQUENCE OF 278-289</scope>
    <scope>MUTAGENESIS OF VAL-270; GLN-272; VAL-273; ASP-274; GLY-275; THR-276; GLY-277; ASP-278; SER-280 AND GLU-282</scope>
</reference>
<reference key="9">
    <citation type="journal article" date="2006" name="Cell">
        <title>Global, in vivo, and site-specific phosphorylation dynamics in signaling networks.</title>
        <authorList>
            <person name="Olsen J.V."/>
            <person name="Blagoev B."/>
            <person name="Gnad F."/>
            <person name="Macek B."/>
            <person name="Kumar C."/>
            <person name="Mortensen P."/>
            <person name="Mann M."/>
        </authorList>
    </citation>
    <scope>PHOSPHORYLATION [LARGE SCALE ANALYSIS] AT SER-316 AND SER-321</scope>
    <scope>IDENTIFICATION BY MASS SPECTROMETRY [LARGE SCALE ANALYSIS]</scope>
    <source>
        <tissue>Cervix carcinoma</tissue>
    </source>
</reference>
<reference key="10">
    <citation type="journal article" date="2006" name="Mol. Cell. Biol.">
        <title>Uncleaved TFIIA is a substrate for taspase 1 and active in transcription.</title>
        <authorList>
            <person name="Zhou H."/>
            <person name="Spicuglia S."/>
            <person name="Hsieh J.J."/>
            <person name="Mitsiou D.J."/>
            <person name="Hoiby T."/>
            <person name="Veenstra G.J."/>
            <person name="Korsmeyer S.J."/>
            <person name="Stunnenberg H.G."/>
        </authorList>
    </citation>
    <scope>FUNCTION OF THE GTF2A1 PRECURSOR</scope>
    <scope>CLEAVAGE BY TASP1</scope>
</reference>
<reference key="11">
    <citation type="journal article" date="2009" name="Anal. Chem.">
        <title>Lys-N and trypsin cover complementary parts of the phosphoproteome in a refined SCX-based approach.</title>
        <authorList>
            <person name="Gauci S."/>
            <person name="Helbig A.O."/>
            <person name="Slijper M."/>
            <person name="Krijgsveld J."/>
            <person name="Heck A.J."/>
            <person name="Mohammed S."/>
        </authorList>
    </citation>
    <scope>ACETYLATION [LARGE SCALE ANALYSIS] AT ALA-2</scope>
    <scope>CLEAVAGE OF INITIATOR METHIONINE [LARGE SCALE ANALYSIS]</scope>
    <scope>IDENTIFICATION BY MASS SPECTROMETRY [LARGE SCALE ANALYSIS]</scope>
</reference>
<reference key="12">
    <citation type="journal article" date="2011" name="BMC Syst. Biol.">
        <title>Initial characterization of the human central proteome.</title>
        <authorList>
            <person name="Burkard T.R."/>
            <person name="Planyavsky M."/>
            <person name="Kaupe I."/>
            <person name="Breitwieser F.P."/>
            <person name="Buerckstuemmer T."/>
            <person name="Bennett K.L."/>
            <person name="Superti-Furga G."/>
            <person name="Colinge J."/>
        </authorList>
    </citation>
    <scope>IDENTIFICATION BY MASS SPECTROMETRY [LARGE SCALE ANALYSIS]</scope>
</reference>
<reference key="13">
    <citation type="journal article" date="2012" name="Proc. Natl. Acad. Sci. U.S.A.">
        <title>N-terminal acetylome analyses and functional insights of the N-terminal acetyltransferase NatB.</title>
        <authorList>
            <person name="Van Damme P."/>
            <person name="Lasa M."/>
            <person name="Polevoda B."/>
            <person name="Gazquez C."/>
            <person name="Elosegui-Artola A."/>
            <person name="Kim D.S."/>
            <person name="De Juan-Pardo E."/>
            <person name="Demeyer K."/>
            <person name="Hole K."/>
            <person name="Larrea E."/>
            <person name="Timmerman E."/>
            <person name="Prieto J."/>
            <person name="Arnesen T."/>
            <person name="Sherman F."/>
            <person name="Gevaert K."/>
            <person name="Aldabe R."/>
        </authorList>
    </citation>
    <scope>ACETYLATION [LARGE SCALE ANALYSIS] AT ALA-2</scope>
    <scope>CLEAVAGE OF INITIATOR METHIONINE [LARGE SCALE ANALYSIS]</scope>
    <scope>IDENTIFICATION BY MASS SPECTROMETRY [LARGE SCALE ANALYSIS]</scope>
</reference>
<reference key="14">
    <citation type="journal article" date="2014" name="J. Proteomics">
        <title>An enzyme assisted RP-RPLC approach for in-depth analysis of human liver phosphoproteome.</title>
        <authorList>
            <person name="Bian Y."/>
            <person name="Song C."/>
            <person name="Cheng K."/>
            <person name="Dong M."/>
            <person name="Wang F."/>
            <person name="Huang J."/>
            <person name="Sun D."/>
            <person name="Wang L."/>
            <person name="Ye M."/>
            <person name="Zou H."/>
        </authorList>
    </citation>
    <scope>IDENTIFICATION BY MASS SPECTROMETRY [LARGE SCALE ANALYSIS]</scope>
    <source>
        <tissue>Liver</tissue>
    </source>
</reference>
<reference key="15">
    <citation type="journal article" date="2016" name="Nature">
        <title>Near-atomic resolution visualization of human transcription promoter opening.</title>
        <authorList>
            <person name="He Y."/>
            <person name="Yan C."/>
            <person name="Fang J."/>
            <person name="Inouye C."/>
            <person name="Tjian R."/>
            <person name="Ivanov I."/>
            <person name="Nogales E."/>
        </authorList>
    </citation>
    <scope>STRUCTURE BY ELECTRON MICROSCOPY (3.90 ANGSTROMS) IN COMPLEX WITH PROMOTER DNA</scope>
    <scope>SUBUNIT</scope>
</reference>
<reference key="16">
    <citation type="journal article" date="2006" name="Science">
        <title>The consensus coding sequences of human breast and colorectal cancers.</title>
        <authorList>
            <person name="Sjoeblom T."/>
            <person name="Jones S."/>
            <person name="Wood L.D."/>
            <person name="Parsons D.W."/>
            <person name="Lin J."/>
            <person name="Barber T.D."/>
            <person name="Mandelker D."/>
            <person name="Leary R.J."/>
            <person name="Ptak J."/>
            <person name="Silliman N."/>
            <person name="Szabo S."/>
            <person name="Buckhaults P."/>
            <person name="Farrell C."/>
            <person name="Meeh P."/>
            <person name="Markowitz S.D."/>
            <person name="Willis J."/>
            <person name="Dawson D."/>
            <person name="Willson J.K.V."/>
            <person name="Gazdar A.F."/>
            <person name="Hartigan J."/>
            <person name="Wu L."/>
            <person name="Liu C."/>
            <person name="Parmigiani G."/>
            <person name="Park B.H."/>
            <person name="Bachman K.E."/>
            <person name="Papadopoulos N."/>
            <person name="Vogelstein B."/>
            <person name="Kinzler K.W."/>
            <person name="Velculescu V.E."/>
        </authorList>
    </citation>
    <scope>VARIANT [LARGE SCALE ANALYSIS] VAL-30</scope>
</reference>
<comment type="function">
    <text evidence="2 5">TFIIA is a component of the transcription machinery of RNA polymerase II and plays an important role in transcriptional activation. TFIIA in a complex with TBP mediates transcriptional activity.</text>
</comment>
<comment type="subunit">
    <text evidence="2 7">TFIIA is a heterodimer of the large unprocessed subunit 1 and a small subunit gamma. It was originally believed to be a heterotrimer of an alpha (p35), a beta (p19) and a gamma subunit (p12). TFIIA forms a complex with TBP. Part of TBP-based Pol II pre-initiation complex (PIC), in which Pol II core assembles with general transcription factors and other specific initiation factors including GTF2E1, GTF2E2, GTF2F1, GTF2F2, TCEA1, ERCC2, ERCC3, GTF2H2, GTF2H3, GTF2H4, GTF2H5, GTF2A1, GTF2A2, GTF2B and TBP; this large multi-subunit PIC complex mediates DNA unwinding and targets Pol II core to the transcription start site where the first phosphodiester bond forms.</text>
</comment>
<comment type="interaction">
    <interactant intactId="EBI-389518">
        <id>P52655</id>
    </interactant>
    <interactant intactId="EBI-517623">
        <id>Q96CA5</id>
        <label>BIRC7</label>
    </interactant>
    <organismsDiffer>false</organismsDiffer>
    <experiments>3</experiments>
</comment>
<comment type="interaction">
    <interactant intactId="EBI-389518">
        <id>P52655</id>
    </interactant>
    <interactant intactId="EBI-25852368">
        <id>O75460-2</id>
        <label>ERN1</label>
    </interactant>
    <organismsDiffer>false</organismsDiffer>
    <experiments>3</experiments>
</comment>
<comment type="interaction">
    <interactant intactId="EBI-389518">
        <id>P52655</id>
    </interactant>
    <interactant intactId="EBI-348399">
        <id>P22607</id>
        <label>FGFR3</label>
    </interactant>
    <organismsDiffer>false</organismsDiffer>
    <experiments>3</experiments>
</comment>
<comment type="interaction">
    <interactant intactId="EBI-389518">
        <id>P52655</id>
    </interactant>
    <interactant intactId="EBI-10226858">
        <id>Q0VDC6</id>
        <label>FKBP1A</label>
    </interactant>
    <organismsDiffer>false</organismsDiffer>
    <experiments>3</experiments>
</comment>
<comment type="interaction">
    <interactant intactId="EBI-389518">
        <id>P52655</id>
    </interactant>
    <interactant intactId="EBI-1045262">
        <id>P52657</id>
        <label>GTF2A2</label>
    </interactant>
    <organismsDiffer>false</organismsDiffer>
    <experiments>14</experiments>
</comment>
<comment type="interaction">
    <interactant intactId="EBI-389518">
        <id>P52655</id>
    </interactant>
    <interactant intactId="EBI-350145">
        <id>P01112</id>
        <label>HRAS</label>
    </interactant>
    <organismsDiffer>false</organismsDiffer>
    <experiments>3</experiments>
</comment>
<comment type="interaction">
    <interactant intactId="EBI-389518">
        <id>P52655</id>
    </interactant>
    <interactant intactId="EBI-389739">
        <id>P23511</id>
        <label>NFYA</label>
    </interactant>
    <organismsDiffer>false</organismsDiffer>
    <experiments>3</experiments>
</comment>
<comment type="interaction">
    <interactant intactId="EBI-389518">
        <id>P52655</id>
    </interactant>
    <interactant intactId="EBI-11061759">
        <id>P23511-2</id>
        <label>NFYA</label>
    </interactant>
    <organismsDiffer>false</organismsDiffer>
    <experiments>3</experiments>
</comment>
<comment type="interaction">
    <interactant intactId="EBI-389518">
        <id>P52655</id>
    </interactant>
    <interactant intactId="EBI-50433196">
        <id>A0A6Q8PF08</id>
        <label>PMP22</label>
    </interactant>
    <organismsDiffer>false</organismsDiffer>
    <experiments>3</experiments>
</comment>
<comment type="interaction">
    <interactant intactId="EBI-389518">
        <id>P52655</id>
    </interactant>
    <interactant intactId="EBI-12754095">
        <id>P86480</id>
        <label>PRR20D</label>
    </interactant>
    <organismsDiffer>false</organismsDiffer>
    <experiments>3</experiments>
</comment>
<comment type="interaction">
    <interactant intactId="EBI-389518">
        <id>P52655</id>
    </interactant>
    <interactant intactId="EBI-357669">
        <id>P62333</id>
        <label>PSMC6</label>
    </interactant>
    <organismsDiffer>false</organismsDiffer>
    <experiments>3</experiments>
</comment>
<comment type="interaction">
    <interactant intactId="EBI-389518">
        <id>P52655</id>
    </interactant>
    <interactant intactId="EBI-10198587">
        <id>Q02446</id>
        <label>SP4</label>
    </interactant>
    <organismsDiffer>false</organismsDiffer>
    <experiments>3</experiments>
</comment>
<comment type="interaction">
    <interactant intactId="EBI-389518">
        <id>P52655</id>
    </interactant>
    <interactant intactId="EBI-355371">
        <id>P20226</id>
        <label>TBP</label>
    </interactant>
    <organismsDiffer>false</organismsDiffer>
    <experiments>5</experiments>
</comment>
<comment type="interaction">
    <interactant intactId="EBI-389518">
        <id>P52655</id>
    </interactant>
    <interactant intactId="EBI-716225">
        <id>P62380</id>
        <label>TBPL1</label>
    </interactant>
    <organismsDiffer>false</organismsDiffer>
    <experiments>7</experiments>
</comment>
<comment type="subcellular location">
    <subcellularLocation>
        <location>Nucleus</location>
    </subcellularLocation>
</comment>
<comment type="alternative products">
    <event type="alternative initiation"/>
    <isoform>
        <id>P52655-1</id>
        <name>42 kDa</name>
        <sequence type="displayed"/>
    </isoform>
    <isoform>
        <id>P52655-2</id>
        <name>37 kDa</name>
        <sequence type="described" ref="VSP_018798"/>
    </isoform>
</comment>
<comment type="PTM">
    <text evidence="5">The alpha and beta subunits are postranslationally produced from the precursor form by TASP1. The cleavage promotes proteasomal degradation.</text>
</comment>
<comment type="similarity">
    <text evidence="8">Belongs to the TFIIA subunit 1 family.</text>
</comment>
<evidence type="ECO:0000256" key="1">
    <source>
        <dbReference type="SAM" id="MobiDB-lite"/>
    </source>
</evidence>
<evidence type="ECO:0000269" key="2">
    <source>
    </source>
</evidence>
<evidence type="ECO:0000269" key="3">
    <source>
    </source>
</evidence>
<evidence type="ECO:0000269" key="4">
    <source>
    </source>
</evidence>
<evidence type="ECO:0000269" key="5">
    <source>
    </source>
</evidence>
<evidence type="ECO:0000269" key="6">
    <source>
    </source>
</evidence>
<evidence type="ECO:0000269" key="7">
    <source>
    </source>
</evidence>
<evidence type="ECO:0000305" key="8"/>
<evidence type="ECO:0007744" key="9">
    <source>
        <dbReference type="PDB" id="5IYD"/>
    </source>
</evidence>
<evidence type="ECO:0007744" key="10">
    <source>
    </source>
</evidence>
<evidence type="ECO:0007744" key="11">
    <source>
    </source>
</evidence>
<evidence type="ECO:0007744" key="12">
    <source>
    </source>
</evidence>
<evidence type="ECO:0007829" key="13">
    <source>
        <dbReference type="PDB" id="1NVP"/>
    </source>
</evidence>
<evidence type="ECO:0007829" key="14">
    <source>
        <dbReference type="PDB" id="5M4S"/>
    </source>
</evidence>
<evidence type="ECO:0007829" key="15">
    <source>
        <dbReference type="PDB" id="7NVU"/>
    </source>
</evidence>
<proteinExistence type="evidence at protein level"/>
<dbReference type="EMBL" id="X75383">
    <property type="protein sequence ID" value="CAA53151.1"/>
    <property type="molecule type" value="mRNA"/>
</dbReference>
<dbReference type="EMBL" id="X75383">
    <property type="protein sequence ID" value="CAA53152.1"/>
    <property type="molecule type" value="mRNA"/>
</dbReference>
<dbReference type="EMBL" id="X77225">
    <property type="protein sequence ID" value="CAA54442.1"/>
    <property type="molecule type" value="mRNA"/>
</dbReference>
<dbReference type="EMBL" id="D14887">
    <property type="protein sequence ID" value="BAA03604.1"/>
    <property type="molecule type" value="mRNA"/>
</dbReference>
<dbReference type="EMBL" id="D14886">
    <property type="protein sequence ID" value="BAA03603.1"/>
    <property type="molecule type" value="mRNA"/>
</dbReference>
<dbReference type="EMBL" id="AC010582">
    <property type="protein sequence ID" value="AAF26776.1"/>
    <property type="molecule type" value="Genomic_DNA"/>
</dbReference>
<dbReference type="EMBL" id="BC107155">
    <property type="protein sequence ID" value="AAI07156.1"/>
    <property type="molecule type" value="mRNA"/>
</dbReference>
<dbReference type="EMBL" id="BC107156">
    <property type="protein sequence ID" value="AAI07157.1"/>
    <property type="molecule type" value="mRNA"/>
</dbReference>
<dbReference type="CCDS" id="CCDS9873.1">
    <molecule id="P52655-1"/>
</dbReference>
<dbReference type="CCDS" id="CCDS9874.1">
    <molecule id="P52655-2"/>
</dbReference>
<dbReference type="PIR" id="A49077">
    <property type="entry name" value="A49077"/>
</dbReference>
<dbReference type="RefSeq" id="NP_001265869.1">
    <property type="nucleotide sequence ID" value="NM_001278940.1"/>
</dbReference>
<dbReference type="RefSeq" id="NP_056943.1">
    <molecule id="P52655-1"/>
    <property type="nucleotide sequence ID" value="NM_015859.4"/>
</dbReference>
<dbReference type="RefSeq" id="NP_963889.1">
    <molecule id="P52655-2"/>
    <property type="nucleotide sequence ID" value="NM_201595.3"/>
</dbReference>
<dbReference type="PDB" id="1NVP">
    <property type="method" value="X-ray"/>
    <property type="resolution" value="2.10 A"/>
    <property type="chains" value="B=2-58, C=303-376"/>
</dbReference>
<dbReference type="PDB" id="5FUR">
    <property type="method" value="EM"/>
    <property type="resolution" value="8.50 A"/>
    <property type="chains" value="B=9-51, C=330-376"/>
</dbReference>
<dbReference type="PDB" id="5IY6">
    <property type="method" value="EM"/>
    <property type="resolution" value="7.20 A"/>
    <property type="chains" value="N=1-376"/>
</dbReference>
<dbReference type="PDB" id="5IY7">
    <property type="method" value="EM"/>
    <property type="resolution" value="8.60 A"/>
    <property type="chains" value="N=1-376"/>
</dbReference>
<dbReference type="PDB" id="5IY8">
    <property type="method" value="EM"/>
    <property type="resolution" value="7.90 A"/>
    <property type="chains" value="N=1-376"/>
</dbReference>
<dbReference type="PDB" id="5IY9">
    <property type="method" value="EM"/>
    <property type="resolution" value="6.30 A"/>
    <property type="chains" value="N=1-376"/>
</dbReference>
<dbReference type="PDB" id="5IYA">
    <property type="method" value="EM"/>
    <property type="resolution" value="5.40 A"/>
    <property type="chains" value="N=1-376"/>
</dbReference>
<dbReference type="PDB" id="5IYB">
    <property type="method" value="EM"/>
    <property type="resolution" value="3.90 A"/>
    <property type="chains" value="N=1-376"/>
</dbReference>
<dbReference type="PDB" id="5IYC">
    <property type="method" value="EM"/>
    <property type="resolution" value="3.90 A"/>
    <property type="chains" value="N=1-376"/>
</dbReference>
<dbReference type="PDB" id="5IYD">
    <property type="method" value="EM"/>
    <property type="resolution" value="3.90 A"/>
    <property type="chains" value="N=1-376"/>
</dbReference>
<dbReference type="PDB" id="5M4S">
    <property type="method" value="X-ray"/>
    <property type="resolution" value="2.38 A"/>
    <property type="chains" value="A=2-58, A=328-376"/>
</dbReference>
<dbReference type="PDB" id="6MZM">
    <property type="method" value="EM"/>
    <property type="resolution" value="7.50 A"/>
    <property type="chains" value="W=9-376"/>
</dbReference>
<dbReference type="PDB" id="6O9L">
    <property type="method" value="EM"/>
    <property type="resolution" value="7.20 A"/>
    <property type="chains" value="N=1-376"/>
</dbReference>
<dbReference type="PDB" id="7EDX">
    <property type="method" value="EM"/>
    <property type="resolution" value="4.50 A"/>
    <property type="chains" value="Q=1-376"/>
</dbReference>
<dbReference type="PDB" id="7EG7">
    <property type="method" value="EM"/>
    <property type="resolution" value="6.20 A"/>
    <property type="chains" value="Q=1-376"/>
</dbReference>
<dbReference type="PDB" id="7EG8">
    <property type="method" value="EM"/>
    <property type="resolution" value="7.40 A"/>
    <property type="chains" value="Q=1-376"/>
</dbReference>
<dbReference type="PDB" id="7EG9">
    <property type="method" value="EM"/>
    <property type="resolution" value="3.70 A"/>
    <property type="chains" value="Q=1-376"/>
</dbReference>
<dbReference type="PDB" id="7EGA">
    <property type="method" value="EM"/>
    <property type="resolution" value="4.10 A"/>
    <property type="chains" value="Q=1-376"/>
</dbReference>
<dbReference type="PDB" id="7EGB">
    <property type="method" value="EM"/>
    <property type="resolution" value="3.30 A"/>
    <property type="chains" value="Q=1-376"/>
</dbReference>
<dbReference type="PDB" id="7EGC">
    <property type="method" value="EM"/>
    <property type="resolution" value="3.90 A"/>
    <property type="chains" value="Q=1-376"/>
</dbReference>
<dbReference type="PDB" id="7EGD">
    <property type="method" value="EM"/>
    <property type="resolution" value="6.75 A"/>
    <property type="chains" value="Q=1-376"/>
</dbReference>
<dbReference type="PDB" id="7EGI">
    <property type="method" value="EM"/>
    <property type="resolution" value="9.82 A"/>
    <property type="chains" value="Q=1-376"/>
</dbReference>
<dbReference type="PDB" id="7EGJ">
    <property type="method" value="EM"/>
    <property type="resolution" value="8.64 A"/>
    <property type="chains" value="Q=1-376"/>
</dbReference>
<dbReference type="PDB" id="7LBM">
    <property type="method" value="EM"/>
    <property type="resolution" value="4.80 A"/>
    <property type="chains" value="M=1-376"/>
</dbReference>
<dbReference type="PDB" id="7NVR">
    <property type="method" value="EM"/>
    <property type="resolution" value="4.50 A"/>
    <property type="chains" value="U=1-376"/>
</dbReference>
<dbReference type="PDB" id="7NVS">
    <property type="method" value="EM"/>
    <property type="resolution" value="2.80 A"/>
    <property type="chains" value="U=1-376"/>
</dbReference>
<dbReference type="PDB" id="7NVT">
    <property type="method" value="EM"/>
    <property type="resolution" value="2.90 A"/>
    <property type="chains" value="U=1-376"/>
</dbReference>
<dbReference type="PDB" id="7NVU">
    <property type="method" value="EM"/>
    <property type="resolution" value="2.50 A"/>
    <property type="chains" value="U=1-376"/>
</dbReference>
<dbReference type="PDB" id="7NVY">
    <property type="method" value="EM"/>
    <property type="resolution" value="7.30 A"/>
    <property type="chains" value="U=1-376"/>
</dbReference>
<dbReference type="PDB" id="7NVZ">
    <property type="method" value="EM"/>
    <property type="resolution" value="7.20 A"/>
    <property type="chains" value="U=1-376"/>
</dbReference>
<dbReference type="PDB" id="7NW0">
    <property type="method" value="EM"/>
    <property type="resolution" value="6.60 A"/>
    <property type="chains" value="U=1-376"/>
</dbReference>
<dbReference type="PDB" id="7ZWC">
    <property type="method" value="EM"/>
    <property type="resolution" value="3.20 A"/>
    <property type="chains" value="U=1-376"/>
</dbReference>
<dbReference type="PDB" id="7ZWD">
    <property type="method" value="EM"/>
    <property type="resolution" value="3.00 A"/>
    <property type="chains" value="U=1-376"/>
</dbReference>
<dbReference type="PDB" id="7ZX7">
    <property type="method" value="EM"/>
    <property type="resolution" value="3.40 A"/>
    <property type="chains" value="U=1-376"/>
</dbReference>
<dbReference type="PDB" id="7ZX8">
    <property type="method" value="EM"/>
    <property type="resolution" value="3.00 A"/>
    <property type="chains" value="U=1-376"/>
</dbReference>
<dbReference type="PDB" id="7ZXE">
    <property type="method" value="EM"/>
    <property type="resolution" value="3.50 A"/>
    <property type="chains" value="U=1-376"/>
</dbReference>
<dbReference type="PDB" id="8BVW">
    <property type="method" value="EM"/>
    <property type="resolution" value="4.00 A"/>
    <property type="chains" value="U=1-376"/>
</dbReference>
<dbReference type="PDB" id="8BYQ">
    <property type="method" value="EM"/>
    <property type="resolution" value="4.10 A"/>
    <property type="chains" value="U=1-376"/>
</dbReference>
<dbReference type="PDB" id="8BZ1">
    <property type="method" value="EM"/>
    <property type="resolution" value="3.80 A"/>
    <property type="chains" value="U=1-376"/>
</dbReference>
<dbReference type="PDB" id="8GXQ">
    <property type="method" value="EM"/>
    <property type="resolution" value="5.04 A"/>
    <property type="chains" value="DQ=1-376"/>
</dbReference>
<dbReference type="PDB" id="8GXS">
    <property type="method" value="EM"/>
    <property type="resolution" value="4.16 A"/>
    <property type="chains" value="DQ=1-376"/>
</dbReference>
<dbReference type="PDB" id="8S51">
    <property type="method" value="EM"/>
    <property type="resolution" value="3.10 A"/>
    <property type="chains" value="U=1-376"/>
</dbReference>
<dbReference type="PDB" id="8S52">
    <property type="method" value="EM"/>
    <property type="resolution" value="2.90 A"/>
    <property type="chains" value="U=1-376"/>
</dbReference>
<dbReference type="PDB" id="8S5N">
    <property type="method" value="EM"/>
    <property type="resolution" value="3.40 A"/>
    <property type="chains" value="U=1-376"/>
</dbReference>
<dbReference type="PDB" id="8WAK">
    <property type="method" value="EM"/>
    <property type="resolution" value="5.47 A"/>
    <property type="chains" value="Q=1-376"/>
</dbReference>
<dbReference type="PDB" id="8WAL">
    <property type="method" value="EM"/>
    <property type="resolution" value="8.52 A"/>
    <property type="chains" value="Q=1-376"/>
</dbReference>
<dbReference type="PDB" id="8WAN">
    <property type="method" value="EM"/>
    <property type="resolution" value="6.07 A"/>
    <property type="chains" value="Q=1-376"/>
</dbReference>
<dbReference type="PDB" id="8WAO">
    <property type="method" value="EM"/>
    <property type="resolution" value="6.40 A"/>
    <property type="chains" value="Q=1-376"/>
</dbReference>
<dbReference type="PDB" id="8WAP">
    <property type="method" value="EM"/>
    <property type="resolution" value="5.85 A"/>
    <property type="chains" value="Q=1-376"/>
</dbReference>
<dbReference type="PDB" id="8WAQ">
    <property type="method" value="EM"/>
    <property type="resolution" value="6.29 A"/>
    <property type="chains" value="Q=1-376"/>
</dbReference>
<dbReference type="PDB" id="8WAR">
    <property type="method" value="EM"/>
    <property type="resolution" value="7.20 A"/>
    <property type="chains" value="Q=1-376"/>
</dbReference>
<dbReference type="PDB" id="8WAS">
    <property type="method" value="EM"/>
    <property type="resolution" value="6.13 A"/>
    <property type="chains" value="Q=1-376"/>
</dbReference>
<dbReference type="PDBsum" id="1NVP"/>
<dbReference type="PDBsum" id="5FUR"/>
<dbReference type="PDBsum" id="5IY6"/>
<dbReference type="PDBsum" id="5IY7"/>
<dbReference type="PDBsum" id="5IY8"/>
<dbReference type="PDBsum" id="5IY9"/>
<dbReference type="PDBsum" id="5IYA"/>
<dbReference type="PDBsum" id="5IYB"/>
<dbReference type="PDBsum" id="5IYC"/>
<dbReference type="PDBsum" id="5IYD"/>
<dbReference type="PDBsum" id="5M4S"/>
<dbReference type="PDBsum" id="6MZM"/>
<dbReference type="PDBsum" id="6O9L"/>
<dbReference type="PDBsum" id="7EDX"/>
<dbReference type="PDBsum" id="7EG7"/>
<dbReference type="PDBsum" id="7EG8"/>
<dbReference type="PDBsum" id="7EG9"/>
<dbReference type="PDBsum" id="7EGA"/>
<dbReference type="PDBsum" id="7EGB"/>
<dbReference type="PDBsum" id="7EGC"/>
<dbReference type="PDBsum" id="7EGD"/>
<dbReference type="PDBsum" id="7EGI"/>
<dbReference type="PDBsum" id="7EGJ"/>
<dbReference type="PDBsum" id="7LBM"/>
<dbReference type="PDBsum" id="7NVR"/>
<dbReference type="PDBsum" id="7NVS"/>
<dbReference type="PDBsum" id="7NVT"/>
<dbReference type="PDBsum" id="7NVU"/>
<dbReference type="PDBsum" id="7NVY"/>
<dbReference type="PDBsum" id="7NVZ"/>
<dbReference type="PDBsum" id="7NW0"/>
<dbReference type="PDBsum" id="7ZWC"/>
<dbReference type="PDBsum" id="7ZWD"/>
<dbReference type="PDBsum" id="7ZX7"/>
<dbReference type="PDBsum" id="7ZX8"/>
<dbReference type="PDBsum" id="7ZXE"/>
<dbReference type="PDBsum" id="8BVW"/>
<dbReference type="PDBsum" id="8BYQ"/>
<dbReference type="PDBsum" id="8BZ1"/>
<dbReference type="PDBsum" id="8GXQ"/>
<dbReference type="PDBsum" id="8GXS"/>
<dbReference type="PDBsum" id="8S51"/>
<dbReference type="PDBsum" id="8S52"/>
<dbReference type="PDBsum" id="8S5N"/>
<dbReference type="PDBsum" id="8WAK"/>
<dbReference type="PDBsum" id="8WAL"/>
<dbReference type="PDBsum" id="8WAN"/>
<dbReference type="PDBsum" id="8WAO"/>
<dbReference type="PDBsum" id="8WAP"/>
<dbReference type="PDBsum" id="8WAQ"/>
<dbReference type="PDBsum" id="8WAR"/>
<dbReference type="PDBsum" id="8WAS"/>
<dbReference type="EMDB" id="EMD-12610"/>
<dbReference type="EMDB" id="EMD-12611"/>
<dbReference type="EMDB" id="EMD-12612"/>
<dbReference type="EMDB" id="EMD-12613"/>
<dbReference type="EMDB" id="EMD-12617"/>
<dbReference type="EMDB" id="EMD-12618"/>
<dbReference type="EMDB" id="EMD-12619"/>
<dbReference type="EMDB" id="EMD-14996"/>
<dbReference type="EMDB" id="EMD-14997"/>
<dbReference type="EMDB" id="EMD-15006"/>
<dbReference type="EMDB" id="EMD-15007"/>
<dbReference type="EMDB" id="EMD-15009"/>
<dbReference type="EMDB" id="EMD-16274"/>
<dbReference type="EMDB" id="EMD-16331"/>
<dbReference type="EMDB" id="EMD-16335"/>
<dbReference type="EMDB" id="EMD-19718"/>
<dbReference type="EMDB" id="EMD-19719"/>
<dbReference type="EMDB" id="EMD-19743"/>
<dbReference type="EMDB" id="EMD-23255"/>
<dbReference type="EMDB" id="EMD-31075"/>
<dbReference type="EMDB" id="EMD-31107"/>
<dbReference type="EMDB" id="EMD-31108"/>
<dbReference type="EMDB" id="EMD-31109"/>
<dbReference type="EMDB" id="EMD-31110"/>
<dbReference type="EMDB" id="EMD-31111"/>
<dbReference type="EMDB" id="EMD-31112"/>
<dbReference type="EMDB" id="EMD-31113"/>
<dbReference type="EMDB" id="EMD-31118"/>
<dbReference type="EMDB" id="EMD-31119"/>
<dbReference type="EMDB" id="EMD-3305"/>
<dbReference type="EMDB" id="EMD-34359"/>
<dbReference type="EMDB" id="EMD-34360"/>
<dbReference type="EMDB" id="EMD-37395"/>
<dbReference type="EMDB" id="EMD-37396"/>
<dbReference type="EMDB" id="EMD-37398"/>
<dbReference type="EMDB" id="EMD-37399"/>
<dbReference type="EMDB" id="EMD-37400"/>
<dbReference type="EMDB" id="EMD-37401"/>
<dbReference type="EMDB" id="EMD-37402"/>
<dbReference type="EMDB" id="EMD-37403"/>
<dbReference type="EMDB" id="EMD-8132"/>
<dbReference type="EMDB" id="EMD-8133"/>
<dbReference type="EMDB" id="EMD-8134"/>
<dbReference type="EMDB" id="EMD-8135"/>
<dbReference type="EMDB" id="EMD-8136"/>
<dbReference type="EMDB" id="EMD-8137"/>
<dbReference type="EMDB" id="EMD-8138"/>
<dbReference type="EMDB" id="EMD-9306"/>
<dbReference type="SMR" id="P52655"/>
<dbReference type="BioGRID" id="109212">
    <property type="interactions" value="89"/>
</dbReference>
<dbReference type="ComplexPortal" id="CPX-519">
    <property type="entry name" value="General transcription factor complex TFIIA"/>
</dbReference>
<dbReference type="CORUM" id="P52655"/>
<dbReference type="DIP" id="DIP-33225N"/>
<dbReference type="FunCoup" id="P52655">
    <property type="interactions" value="3211"/>
</dbReference>
<dbReference type="IntAct" id="P52655">
    <property type="interactions" value="27"/>
</dbReference>
<dbReference type="MINT" id="P52655"/>
<dbReference type="STRING" id="9606.ENSP00000452454"/>
<dbReference type="BindingDB" id="P52655"/>
<dbReference type="ChEMBL" id="CHEMBL4832"/>
<dbReference type="GlyCosmos" id="P52655">
    <property type="glycosylation" value="7 sites, 2 glycans"/>
</dbReference>
<dbReference type="GlyGen" id="P52655">
    <property type="glycosylation" value="7 sites, 2 O-linked glycans (7 sites)"/>
</dbReference>
<dbReference type="iPTMnet" id="P52655"/>
<dbReference type="PhosphoSitePlus" id="P52655"/>
<dbReference type="BioMuta" id="GTF2A1"/>
<dbReference type="DMDM" id="1711663"/>
<dbReference type="jPOST" id="P52655"/>
<dbReference type="MassIVE" id="P52655"/>
<dbReference type="PaxDb" id="9606-ENSP00000452454"/>
<dbReference type="PeptideAtlas" id="P52655"/>
<dbReference type="ProteomicsDB" id="56499">
    <molecule id="P52655-1"/>
</dbReference>
<dbReference type="ProteomicsDB" id="56500">
    <molecule id="P52655-2"/>
</dbReference>
<dbReference type="Pumba" id="P52655"/>
<dbReference type="Antibodypedia" id="76">
    <property type="antibodies" value="311 antibodies from 33 providers"/>
</dbReference>
<dbReference type="DNASU" id="2957"/>
<dbReference type="Ensembl" id="ENST00000434192.2">
    <molecule id="P52655-2"/>
    <property type="protein sequence ID" value="ENSP00000409492.2"/>
    <property type="gene ID" value="ENSG00000165417.12"/>
</dbReference>
<dbReference type="Ensembl" id="ENST00000553612.6">
    <molecule id="P52655-1"/>
    <property type="protein sequence ID" value="ENSP00000452454.1"/>
    <property type="gene ID" value="ENSG00000165417.12"/>
</dbReference>
<dbReference type="GeneID" id="2957"/>
<dbReference type="KEGG" id="hsa:2957"/>
<dbReference type="MANE-Select" id="ENST00000553612.6">
    <property type="protein sequence ID" value="ENSP00000452454.1"/>
    <property type="RefSeq nucleotide sequence ID" value="NM_015859.4"/>
    <property type="RefSeq protein sequence ID" value="NP_056943.1"/>
</dbReference>
<dbReference type="UCSC" id="uc001xvf.4">
    <molecule id="P52655-1"/>
    <property type="organism name" value="human"/>
</dbReference>
<dbReference type="AGR" id="HGNC:4646"/>
<dbReference type="CTD" id="2957"/>
<dbReference type="DisGeNET" id="2957"/>
<dbReference type="GeneCards" id="GTF2A1"/>
<dbReference type="HGNC" id="HGNC:4646">
    <property type="gene designation" value="GTF2A1"/>
</dbReference>
<dbReference type="HPA" id="ENSG00000165417">
    <property type="expression patterns" value="Low tissue specificity"/>
</dbReference>
<dbReference type="MIM" id="600520">
    <property type="type" value="gene"/>
</dbReference>
<dbReference type="neXtProt" id="NX_P52655"/>
<dbReference type="OpenTargets" id="ENSG00000165417"/>
<dbReference type="PharmGKB" id="PA29033"/>
<dbReference type="VEuPathDB" id="HostDB:ENSG00000165417"/>
<dbReference type="eggNOG" id="KOG2652">
    <property type="taxonomic scope" value="Eukaryota"/>
</dbReference>
<dbReference type="GeneTree" id="ENSGT00940000156726"/>
<dbReference type="HOGENOM" id="CLU_030027_5_0_1"/>
<dbReference type="InParanoid" id="P52655"/>
<dbReference type="OMA" id="EVCDASQ"/>
<dbReference type="OrthoDB" id="6275927at2759"/>
<dbReference type="PAN-GO" id="P52655">
    <property type="GO annotations" value="2 GO annotations based on evolutionary models"/>
</dbReference>
<dbReference type="PhylomeDB" id="P52655"/>
<dbReference type="TreeFam" id="TF350445"/>
<dbReference type="PathwayCommons" id="P52655"/>
<dbReference type="Reactome" id="R-HSA-167161">
    <property type="pathway name" value="HIV Transcription Initiation"/>
</dbReference>
<dbReference type="Reactome" id="R-HSA-167162">
    <property type="pathway name" value="RNA Polymerase II HIV Promoter Escape"/>
</dbReference>
<dbReference type="Reactome" id="R-HSA-167172">
    <property type="pathway name" value="Transcription of the HIV genome"/>
</dbReference>
<dbReference type="Reactome" id="R-HSA-674695">
    <property type="pathway name" value="RNA Polymerase II Pre-transcription Events"/>
</dbReference>
<dbReference type="Reactome" id="R-HSA-6807505">
    <property type="pathway name" value="RNA polymerase II transcribes snRNA genes"/>
</dbReference>
<dbReference type="Reactome" id="R-HSA-73776">
    <property type="pathway name" value="RNA Polymerase II Promoter Escape"/>
</dbReference>
<dbReference type="Reactome" id="R-HSA-73779">
    <property type="pathway name" value="RNA Polymerase II Transcription Pre-Initiation And Promoter Opening"/>
</dbReference>
<dbReference type="Reactome" id="R-HSA-75953">
    <property type="pathway name" value="RNA Polymerase II Transcription Initiation"/>
</dbReference>
<dbReference type="Reactome" id="R-HSA-76042">
    <property type="pathway name" value="RNA Polymerase II Transcription Initiation And Promoter Clearance"/>
</dbReference>
<dbReference type="Reactome" id="R-HSA-9018519">
    <property type="pathway name" value="Estrogen-dependent gene expression"/>
</dbReference>
<dbReference type="SignaLink" id="P52655"/>
<dbReference type="SIGNOR" id="P52655"/>
<dbReference type="BioGRID-ORCS" id="2957">
    <property type="hits" value="660 hits in 1169 CRISPR screens"/>
</dbReference>
<dbReference type="ChiTaRS" id="GTF2A1">
    <property type="organism name" value="human"/>
</dbReference>
<dbReference type="EvolutionaryTrace" id="P52655"/>
<dbReference type="GeneWiki" id="GTF2A1"/>
<dbReference type="GenomeRNAi" id="2957"/>
<dbReference type="Pharos" id="P52655">
    <property type="development level" value="Tchem"/>
</dbReference>
<dbReference type="PRO" id="PR:P52655"/>
<dbReference type="Proteomes" id="UP000005640">
    <property type="component" value="Chromosome 14"/>
</dbReference>
<dbReference type="RNAct" id="P52655">
    <property type="molecule type" value="protein"/>
</dbReference>
<dbReference type="Bgee" id="ENSG00000165417">
    <property type="expression patterns" value="Expressed in esophagus squamous epithelium and 192 other cell types or tissues"/>
</dbReference>
<dbReference type="ExpressionAtlas" id="P52655">
    <property type="expression patterns" value="baseline and differential"/>
</dbReference>
<dbReference type="GO" id="GO:0005829">
    <property type="term" value="C:cytosol"/>
    <property type="evidence" value="ECO:0000314"/>
    <property type="project" value="HPA"/>
</dbReference>
<dbReference type="GO" id="GO:0005654">
    <property type="term" value="C:nucleoplasm"/>
    <property type="evidence" value="ECO:0000314"/>
    <property type="project" value="HPA"/>
</dbReference>
<dbReference type="GO" id="GO:0005634">
    <property type="term" value="C:nucleus"/>
    <property type="evidence" value="ECO:0000314"/>
    <property type="project" value="ComplexPortal"/>
</dbReference>
<dbReference type="GO" id="GO:0005672">
    <property type="term" value="C:transcription factor TFIIA complex"/>
    <property type="evidence" value="ECO:0000314"/>
    <property type="project" value="BHF-UCL"/>
</dbReference>
<dbReference type="GO" id="GO:0005669">
    <property type="term" value="C:transcription factor TFIID complex"/>
    <property type="evidence" value="ECO:0000314"/>
    <property type="project" value="UniProtKB"/>
</dbReference>
<dbReference type="GO" id="GO:0097550">
    <property type="term" value="C:transcription preinitiation complex"/>
    <property type="evidence" value="ECO:0000314"/>
    <property type="project" value="GO_Central"/>
</dbReference>
<dbReference type="GO" id="GO:0003677">
    <property type="term" value="F:DNA binding"/>
    <property type="evidence" value="ECO:0000314"/>
    <property type="project" value="BHF-UCL"/>
</dbReference>
<dbReference type="GO" id="GO:0046982">
    <property type="term" value="F:protein heterodimerization activity"/>
    <property type="evidence" value="ECO:0000353"/>
    <property type="project" value="BHF-UCL"/>
</dbReference>
<dbReference type="GO" id="GO:0000979">
    <property type="term" value="F:RNA polymerase II core promoter sequence-specific DNA binding"/>
    <property type="evidence" value="ECO:0000314"/>
    <property type="project" value="ARUK-UCL"/>
</dbReference>
<dbReference type="GO" id="GO:0016251">
    <property type="term" value="F:RNA polymerase II general transcription initiation factor activity"/>
    <property type="evidence" value="ECO:0000314"/>
    <property type="project" value="ARUK-UCL"/>
</dbReference>
<dbReference type="GO" id="GO:0001091">
    <property type="term" value="F:RNA polymerase II general transcription initiation factor binding"/>
    <property type="evidence" value="ECO:0000353"/>
    <property type="project" value="BHF-UCL"/>
</dbReference>
<dbReference type="GO" id="GO:0061629">
    <property type="term" value="F:RNA polymerase II-specific DNA-binding transcription factor binding"/>
    <property type="evidence" value="ECO:0007669"/>
    <property type="project" value="Ensembl"/>
</dbReference>
<dbReference type="GO" id="GO:0017025">
    <property type="term" value="F:TBP-class protein binding"/>
    <property type="evidence" value="ECO:0000353"/>
    <property type="project" value="ARUK-UCL"/>
</dbReference>
<dbReference type="GO" id="GO:0045944">
    <property type="term" value="P:positive regulation of transcription by RNA polymerase II"/>
    <property type="evidence" value="ECO:0000314"/>
    <property type="project" value="ComplexPortal"/>
</dbReference>
<dbReference type="GO" id="GO:0060261">
    <property type="term" value="P:positive regulation of transcription initiation by RNA polymerase II"/>
    <property type="evidence" value="ECO:0000314"/>
    <property type="project" value="ComplexPortal"/>
</dbReference>
<dbReference type="GO" id="GO:0051123">
    <property type="term" value="P:RNA polymerase II preinitiation complex assembly"/>
    <property type="evidence" value="ECO:0000303"/>
    <property type="project" value="ComplexPortal"/>
</dbReference>
<dbReference type="GO" id="GO:0006366">
    <property type="term" value="P:transcription by RNA polymerase II"/>
    <property type="evidence" value="ECO:0000314"/>
    <property type="project" value="ARUK-UCL"/>
</dbReference>
<dbReference type="CDD" id="cd07976">
    <property type="entry name" value="TFIIA_alpha_beta_like"/>
    <property type="match status" value="2"/>
</dbReference>
<dbReference type="FunFam" id="1.10.287.100:FF:000001">
    <property type="entry name" value="Transcription initiation factor IIA subunit"/>
    <property type="match status" value="1"/>
</dbReference>
<dbReference type="FunFam" id="2.30.18.10:FF:000002">
    <property type="entry name" value="Transcription initiation factor IIA subunit 1"/>
    <property type="match status" value="1"/>
</dbReference>
<dbReference type="Gene3D" id="1.10.287.100">
    <property type="match status" value="1"/>
</dbReference>
<dbReference type="Gene3D" id="2.30.18.10">
    <property type="entry name" value="Transcription factor IIA (TFIIA), beta-barrel domain"/>
    <property type="match status" value="1"/>
</dbReference>
<dbReference type="IDEAL" id="IID00555"/>
<dbReference type="InterPro" id="IPR004855">
    <property type="entry name" value="TFIIA_asu/bsu"/>
</dbReference>
<dbReference type="InterPro" id="IPR009088">
    <property type="entry name" value="TFIIA_b-brl"/>
</dbReference>
<dbReference type="PANTHER" id="PTHR12694">
    <property type="entry name" value="TRANSCRIPTION INITIATION FACTOR IIA SUBUNIT 1"/>
    <property type="match status" value="1"/>
</dbReference>
<dbReference type="PANTHER" id="PTHR12694:SF7">
    <property type="entry name" value="TRANSCRIPTION INITIATION FACTOR IIA SUBUNIT 1"/>
    <property type="match status" value="1"/>
</dbReference>
<dbReference type="Pfam" id="PF03153">
    <property type="entry name" value="TFIIA"/>
    <property type="match status" value="2"/>
</dbReference>
<dbReference type="SMART" id="SM01371">
    <property type="entry name" value="TFIIA"/>
    <property type="match status" value="1"/>
</dbReference>
<dbReference type="SUPFAM" id="SSF47396">
    <property type="entry name" value="Transcription factor IIA (TFIIA), alpha-helical domain"/>
    <property type="match status" value="1"/>
</dbReference>
<dbReference type="SUPFAM" id="SSF50784">
    <property type="entry name" value="Transcription factor IIA (TFIIA), beta-barrel domain"/>
    <property type="match status" value="1"/>
</dbReference>
<sequence length="376" mass="41514">MANSANTNTVPKLYRSVIEDVINDVRDIFLDDGVDEQVLMELKTLWENKLMQSRAVDGFHSEEQQLLLQVQQQHQPQQQQHHHHHHHQQAQPQQTVPQQAQTQQVLIPASQQATAPQVIVPDSKLIQHMNASNMSAAATAATLALPAGVTPVQQILTNSGQLLQVVRAANGAQYIFQPQQSVVLQQQVIPQMQPGGVQAPVIQQVLAPLPGGISPQTGVIIQPQQILFTGNKTQVIPTTVAAPTPAQAQITATGQQQPQAQPAQTQAPLVLQVDGTGDTSSEEDEDEEEDYDDDEEEDKEKDGAEDGQVEEEPLNSEDDVSDEEGQELFDTENVVVCQYDKIHRSKNKWKFHLKDGIMNLNGRDYIFSKAIGDAEW</sequence>